<accession>B0U3V7</accession>
<proteinExistence type="inferred from homology"/>
<organism>
    <name type="scientific">Xylella fastidiosa (strain M12)</name>
    <dbReference type="NCBI Taxonomy" id="405440"/>
    <lineage>
        <taxon>Bacteria</taxon>
        <taxon>Pseudomonadati</taxon>
        <taxon>Pseudomonadota</taxon>
        <taxon>Gammaproteobacteria</taxon>
        <taxon>Lysobacterales</taxon>
        <taxon>Lysobacteraceae</taxon>
        <taxon>Xylella</taxon>
    </lineage>
</organism>
<keyword id="KW-0012">Acyltransferase</keyword>
<keyword id="KW-0028">Amino-acid biosynthesis</keyword>
<keyword id="KW-0198">Cysteine biosynthesis</keyword>
<keyword id="KW-0963">Cytoplasm</keyword>
<keyword id="KW-0808">Transferase</keyword>
<dbReference type="EC" id="2.3.1.-" evidence="1"/>
<dbReference type="EMBL" id="CP000941">
    <property type="protein sequence ID" value="ACA12536.1"/>
    <property type="molecule type" value="Genomic_DNA"/>
</dbReference>
<dbReference type="RefSeq" id="WP_004086016.1">
    <property type="nucleotide sequence ID" value="NC_010513.1"/>
</dbReference>
<dbReference type="SMR" id="B0U3V7"/>
<dbReference type="ESTHER" id="xylfa-metx">
    <property type="family name" value="Homoserine_transacetylase"/>
</dbReference>
<dbReference type="KEGG" id="xfm:Xfasm12_1627"/>
<dbReference type="HOGENOM" id="CLU_028760_1_2_6"/>
<dbReference type="UniPathway" id="UPA00136">
    <property type="reaction ID" value="UER00199"/>
</dbReference>
<dbReference type="GO" id="GO:0005737">
    <property type="term" value="C:cytoplasm"/>
    <property type="evidence" value="ECO:0007669"/>
    <property type="project" value="UniProtKB-SubCell"/>
</dbReference>
<dbReference type="GO" id="GO:0004414">
    <property type="term" value="F:homoserine O-acetyltransferase activity"/>
    <property type="evidence" value="ECO:0007669"/>
    <property type="project" value="TreeGrafter"/>
</dbReference>
<dbReference type="GO" id="GO:0160210">
    <property type="term" value="F:L-serine O-succinyltransferase activity"/>
    <property type="evidence" value="ECO:0007669"/>
    <property type="project" value="RHEA"/>
</dbReference>
<dbReference type="GO" id="GO:0006535">
    <property type="term" value="P:cysteine biosynthetic process from serine"/>
    <property type="evidence" value="ECO:0007669"/>
    <property type="project" value="UniProtKB-UniRule"/>
</dbReference>
<dbReference type="GO" id="GO:0009092">
    <property type="term" value="P:homoserine metabolic process"/>
    <property type="evidence" value="ECO:0007669"/>
    <property type="project" value="TreeGrafter"/>
</dbReference>
<dbReference type="GO" id="GO:0009086">
    <property type="term" value="P:methionine biosynthetic process"/>
    <property type="evidence" value="ECO:0007669"/>
    <property type="project" value="TreeGrafter"/>
</dbReference>
<dbReference type="Gene3D" id="1.10.1740.110">
    <property type="match status" value="1"/>
</dbReference>
<dbReference type="Gene3D" id="3.40.50.1820">
    <property type="entry name" value="alpha/beta hydrolase"/>
    <property type="match status" value="1"/>
</dbReference>
<dbReference type="HAMAP" id="MF_00296">
    <property type="entry name" value="MetX_acyltransf"/>
    <property type="match status" value="1"/>
</dbReference>
<dbReference type="InterPro" id="IPR000073">
    <property type="entry name" value="AB_hydrolase_1"/>
</dbReference>
<dbReference type="InterPro" id="IPR029058">
    <property type="entry name" value="AB_hydrolase_fold"/>
</dbReference>
<dbReference type="InterPro" id="IPR008220">
    <property type="entry name" value="HAT_MetX-like"/>
</dbReference>
<dbReference type="NCBIfam" id="TIGR01392">
    <property type="entry name" value="homoserO_Ac_trn"/>
    <property type="match status" value="1"/>
</dbReference>
<dbReference type="NCBIfam" id="NF001209">
    <property type="entry name" value="PRK00175.1"/>
    <property type="match status" value="1"/>
</dbReference>
<dbReference type="PANTHER" id="PTHR32268">
    <property type="entry name" value="HOMOSERINE O-ACETYLTRANSFERASE"/>
    <property type="match status" value="1"/>
</dbReference>
<dbReference type="PANTHER" id="PTHR32268:SF11">
    <property type="entry name" value="HOMOSERINE O-ACETYLTRANSFERASE"/>
    <property type="match status" value="1"/>
</dbReference>
<dbReference type="Pfam" id="PF00561">
    <property type="entry name" value="Abhydrolase_1"/>
    <property type="match status" value="1"/>
</dbReference>
<dbReference type="PIRSF" id="PIRSF000443">
    <property type="entry name" value="Homoser_Ac_trans"/>
    <property type="match status" value="1"/>
</dbReference>
<dbReference type="SUPFAM" id="SSF53474">
    <property type="entry name" value="alpha/beta-Hydrolases"/>
    <property type="match status" value="1"/>
</dbReference>
<gene>
    <name type="primary">metX</name>
    <name type="ordered locus">Xfasm12_1627</name>
</gene>
<protein>
    <recommendedName>
        <fullName evidence="1">Serine O-succinyltransferase</fullName>
        <shortName evidence="1">SST</shortName>
        <ecNumber evidence="1">2.3.1.-</ecNumber>
    </recommendedName>
</protein>
<reference key="1">
    <citation type="journal article" date="2010" name="J. Bacteriol.">
        <title>Whole genome sequences of two Xylella fastidiosa strains (M12 and M23) causing almond leaf scorch disease in California.</title>
        <authorList>
            <person name="Chen J."/>
            <person name="Xie G."/>
            <person name="Han S."/>
            <person name="Chertkov O."/>
            <person name="Sims D."/>
            <person name="Civerolo E.L."/>
        </authorList>
    </citation>
    <scope>NUCLEOTIDE SEQUENCE [LARGE SCALE GENOMIC DNA]</scope>
    <source>
        <strain>M12</strain>
    </source>
</reference>
<comment type="function">
    <text evidence="1">Transfers a succinyl group from succinyl-CoA to L-serine, forming succinyl-L-serine.</text>
</comment>
<comment type="catalytic activity">
    <reaction evidence="1">
        <text>succinyl-CoA + L-serine = O-succinyl-L-serine + CoA</text>
        <dbReference type="Rhea" id="RHEA:52820"/>
        <dbReference type="ChEBI" id="CHEBI:33384"/>
        <dbReference type="ChEBI" id="CHEBI:57287"/>
        <dbReference type="ChEBI" id="CHEBI:57292"/>
        <dbReference type="ChEBI" id="CHEBI:136856"/>
    </reaction>
</comment>
<comment type="pathway">
    <text evidence="1">Amino-acid biosynthesis; L-cysteine biosynthesis; L-cysteine from L-serine: step 1/2.</text>
</comment>
<comment type="subunit">
    <text evidence="1">Homodimer.</text>
</comment>
<comment type="subcellular location">
    <subcellularLocation>
        <location evidence="1">Cytoplasm</location>
    </subcellularLocation>
</comment>
<comment type="similarity">
    <text evidence="1">Belongs to the AB hydrolase superfamily. MetX family.</text>
</comment>
<sequence>MTEFIPPGSLFHALSSPFAMKRGGQLHHARIAYETWGRLNASATNAILIMPGLSPNAHAAHHDSNAEPGWWESMLGPGKPIDTDRWFVICVNSLGSCKGSTGPASYNPITQAMYRLDFPALSIEDGANSAIEVVHALGIKQLASLIGNSMGGMTALAILLLHPDIARSHINISGSAQALPFSIAIRSLQREAIRLDPHWRQGDYDDTHYPESGLRIARKLGVITYRSALEWDGRFGRVRLDSDQTNDTPFGLEFQIENYLESHAHRFVHTFDPNCYLYLSRSMDWFDVAEYANGDILAGLARIRIQRALAIGSHTDILFPIQQQQQIAEGLRRGGTHATFLGLDSPQGHDAFLVDIARFGPPVKEFLDEL</sequence>
<feature type="chain" id="PRO_1000115239" description="Serine O-succinyltransferase">
    <location>
        <begin position="1"/>
        <end position="370"/>
    </location>
</feature>
<feature type="domain" description="AB hydrolase-1" evidence="1">
    <location>
        <begin position="45"/>
        <end position="354"/>
    </location>
</feature>
<feature type="region of interest" description="Important for substrate specificity" evidence="1">
    <location>
        <begin position="52"/>
        <end position="55"/>
    </location>
</feature>
<feature type="active site" description="Nucleophile" evidence="1">
    <location>
        <position position="149"/>
    </location>
</feature>
<feature type="active site" evidence="1">
    <location>
        <position position="316"/>
    </location>
</feature>
<feature type="active site" evidence="1">
    <location>
        <position position="349"/>
    </location>
</feature>
<feature type="binding site" evidence="1">
    <location>
        <position position="218"/>
    </location>
    <ligand>
        <name>substrate</name>
    </ligand>
</feature>
<feature type="binding site" evidence="1">
    <location>
        <position position="350"/>
    </location>
    <ligand>
        <name>substrate</name>
    </ligand>
</feature>
<feature type="site" description="Important for acyl-CoA specificity" evidence="1">
    <location>
        <position position="186"/>
    </location>
</feature>
<name>SST_XYLFM</name>
<evidence type="ECO:0000255" key="1">
    <source>
        <dbReference type="HAMAP-Rule" id="MF_00296"/>
    </source>
</evidence>